<protein>
    <recommendedName>
        <fullName>Chromobox protein homolog 1</fullName>
    </recommendedName>
    <alternativeName>
        <fullName>Heterochromatin protein 1 homolog beta</fullName>
        <shortName>HP1 beta</shortName>
    </alternativeName>
    <alternativeName>
        <fullName>Heterochromatin protein p25</fullName>
    </alternativeName>
    <alternativeName>
        <fullName>M31</fullName>
    </alternativeName>
    <alternativeName>
        <fullName>Modifier 1 protein</fullName>
    </alternativeName>
</protein>
<organism>
    <name type="scientific">Mus musculus</name>
    <name type="common">Mouse</name>
    <dbReference type="NCBI Taxonomy" id="10090"/>
    <lineage>
        <taxon>Eukaryota</taxon>
        <taxon>Metazoa</taxon>
        <taxon>Chordata</taxon>
        <taxon>Craniata</taxon>
        <taxon>Vertebrata</taxon>
        <taxon>Euteleostomi</taxon>
        <taxon>Mammalia</taxon>
        <taxon>Eutheria</taxon>
        <taxon>Euarchontoglires</taxon>
        <taxon>Glires</taxon>
        <taxon>Rodentia</taxon>
        <taxon>Myomorpha</taxon>
        <taxon>Muroidea</taxon>
        <taxon>Muridae</taxon>
        <taxon>Murinae</taxon>
        <taxon>Mus</taxon>
        <taxon>Mus</taxon>
    </lineage>
</organism>
<sequence length="185" mass="21418">MGKKQNKKKVEEVLEEEEEEYVVEKVLDRRVVKGKVEYLLKWKGFSDEDNTWEPEENLDCPDLIAEFLQSQKTAHETDKSEGGKRKADSDSEDKGEESKPKKKKEESEKPRGFARGLEPERIIGATDSSGELMFLMKWKNSDEADLVPAKEANVKCPQVVISFYEERLTWHSYPSEDDDKKDDKN</sequence>
<reference key="1">
    <citation type="journal article" date="1991" name="Nucleic Acids Res.">
        <title>A sequence motif found in a Drosophila heterochromatin protein is conserved in animals and plants.</title>
        <authorList>
            <person name="Singh P.B."/>
            <person name="Miller J.R."/>
            <person name="Pearce J."/>
            <person name="Kothary R."/>
            <person name="Burton R.D."/>
            <person name="Paro R."/>
            <person name="James T.C."/>
            <person name="Gaunt S.J."/>
        </authorList>
    </citation>
    <scope>NUCLEOTIDE SEQUENCE [MRNA]</scope>
    <scope>TISSUE SPECIFICITY</scope>
    <scope>DOMAIN</scope>
    <source>
        <strain>C57BL/6J</strain>
        <tissue>Embryo</tissue>
    </source>
</reference>
<reference key="2">
    <citation type="journal article" date="2005" name="Science">
        <title>The transcriptional landscape of the mammalian genome.</title>
        <authorList>
            <person name="Carninci P."/>
            <person name="Kasukawa T."/>
            <person name="Katayama S."/>
            <person name="Gough J."/>
            <person name="Frith M.C."/>
            <person name="Maeda N."/>
            <person name="Oyama R."/>
            <person name="Ravasi T."/>
            <person name="Lenhard B."/>
            <person name="Wells C."/>
            <person name="Kodzius R."/>
            <person name="Shimokawa K."/>
            <person name="Bajic V.B."/>
            <person name="Brenner S.E."/>
            <person name="Batalov S."/>
            <person name="Forrest A.R."/>
            <person name="Zavolan M."/>
            <person name="Davis M.J."/>
            <person name="Wilming L.G."/>
            <person name="Aidinis V."/>
            <person name="Allen J.E."/>
            <person name="Ambesi-Impiombato A."/>
            <person name="Apweiler R."/>
            <person name="Aturaliya R.N."/>
            <person name="Bailey T.L."/>
            <person name="Bansal M."/>
            <person name="Baxter L."/>
            <person name="Beisel K.W."/>
            <person name="Bersano T."/>
            <person name="Bono H."/>
            <person name="Chalk A.M."/>
            <person name="Chiu K.P."/>
            <person name="Choudhary V."/>
            <person name="Christoffels A."/>
            <person name="Clutterbuck D.R."/>
            <person name="Crowe M.L."/>
            <person name="Dalla E."/>
            <person name="Dalrymple B.P."/>
            <person name="de Bono B."/>
            <person name="Della Gatta G."/>
            <person name="di Bernardo D."/>
            <person name="Down T."/>
            <person name="Engstrom P."/>
            <person name="Fagiolini M."/>
            <person name="Faulkner G."/>
            <person name="Fletcher C.F."/>
            <person name="Fukushima T."/>
            <person name="Furuno M."/>
            <person name="Futaki S."/>
            <person name="Gariboldi M."/>
            <person name="Georgii-Hemming P."/>
            <person name="Gingeras T.R."/>
            <person name="Gojobori T."/>
            <person name="Green R.E."/>
            <person name="Gustincich S."/>
            <person name="Harbers M."/>
            <person name="Hayashi Y."/>
            <person name="Hensch T.K."/>
            <person name="Hirokawa N."/>
            <person name="Hill D."/>
            <person name="Huminiecki L."/>
            <person name="Iacono M."/>
            <person name="Ikeo K."/>
            <person name="Iwama A."/>
            <person name="Ishikawa T."/>
            <person name="Jakt M."/>
            <person name="Kanapin A."/>
            <person name="Katoh M."/>
            <person name="Kawasawa Y."/>
            <person name="Kelso J."/>
            <person name="Kitamura H."/>
            <person name="Kitano H."/>
            <person name="Kollias G."/>
            <person name="Krishnan S.P."/>
            <person name="Kruger A."/>
            <person name="Kummerfeld S.K."/>
            <person name="Kurochkin I.V."/>
            <person name="Lareau L.F."/>
            <person name="Lazarevic D."/>
            <person name="Lipovich L."/>
            <person name="Liu J."/>
            <person name="Liuni S."/>
            <person name="McWilliam S."/>
            <person name="Madan Babu M."/>
            <person name="Madera M."/>
            <person name="Marchionni L."/>
            <person name="Matsuda H."/>
            <person name="Matsuzawa S."/>
            <person name="Miki H."/>
            <person name="Mignone F."/>
            <person name="Miyake S."/>
            <person name="Morris K."/>
            <person name="Mottagui-Tabar S."/>
            <person name="Mulder N."/>
            <person name="Nakano N."/>
            <person name="Nakauchi H."/>
            <person name="Ng P."/>
            <person name="Nilsson R."/>
            <person name="Nishiguchi S."/>
            <person name="Nishikawa S."/>
            <person name="Nori F."/>
            <person name="Ohara O."/>
            <person name="Okazaki Y."/>
            <person name="Orlando V."/>
            <person name="Pang K.C."/>
            <person name="Pavan W.J."/>
            <person name="Pavesi G."/>
            <person name="Pesole G."/>
            <person name="Petrovsky N."/>
            <person name="Piazza S."/>
            <person name="Reed J."/>
            <person name="Reid J.F."/>
            <person name="Ring B.Z."/>
            <person name="Ringwald M."/>
            <person name="Rost B."/>
            <person name="Ruan Y."/>
            <person name="Salzberg S.L."/>
            <person name="Sandelin A."/>
            <person name="Schneider C."/>
            <person name="Schoenbach C."/>
            <person name="Sekiguchi K."/>
            <person name="Semple C.A."/>
            <person name="Seno S."/>
            <person name="Sessa L."/>
            <person name="Sheng Y."/>
            <person name="Shibata Y."/>
            <person name="Shimada H."/>
            <person name="Shimada K."/>
            <person name="Silva D."/>
            <person name="Sinclair B."/>
            <person name="Sperling S."/>
            <person name="Stupka E."/>
            <person name="Sugiura K."/>
            <person name="Sultana R."/>
            <person name="Takenaka Y."/>
            <person name="Taki K."/>
            <person name="Tammoja K."/>
            <person name="Tan S.L."/>
            <person name="Tang S."/>
            <person name="Taylor M.S."/>
            <person name="Tegner J."/>
            <person name="Teichmann S.A."/>
            <person name="Ueda H.R."/>
            <person name="van Nimwegen E."/>
            <person name="Verardo R."/>
            <person name="Wei C.L."/>
            <person name="Yagi K."/>
            <person name="Yamanishi H."/>
            <person name="Zabarovsky E."/>
            <person name="Zhu S."/>
            <person name="Zimmer A."/>
            <person name="Hide W."/>
            <person name="Bult C."/>
            <person name="Grimmond S.M."/>
            <person name="Teasdale R.D."/>
            <person name="Liu E.T."/>
            <person name="Brusic V."/>
            <person name="Quackenbush J."/>
            <person name="Wahlestedt C."/>
            <person name="Mattick J.S."/>
            <person name="Hume D.A."/>
            <person name="Kai C."/>
            <person name="Sasaki D."/>
            <person name="Tomaru Y."/>
            <person name="Fukuda S."/>
            <person name="Kanamori-Katayama M."/>
            <person name="Suzuki M."/>
            <person name="Aoki J."/>
            <person name="Arakawa T."/>
            <person name="Iida J."/>
            <person name="Imamura K."/>
            <person name="Itoh M."/>
            <person name="Kato T."/>
            <person name="Kawaji H."/>
            <person name="Kawagashira N."/>
            <person name="Kawashima T."/>
            <person name="Kojima M."/>
            <person name="Kondo S."/>
            <person name="Konno H."/>
            <person name="Nakano K."/>
            <person name="Ninomiya N."/>
            <person name="Nishio T."/>
            <person name="Okada M."/>
            <person name="Plessy C."/>
            <person name="Shibata K."/>
            <person name="Shiraki T."/>
            <person name="Suzuki S."/>
            <person name="Tagami M."/>
            <person name="Waki K."/>
            <person name="Watahiki A."/>
            <person name="Okamura-Oho Y."/>
            <person name="Suzuki H."/>
            <person name="Kawai J."/>
            <person name="Hayashizaki Y."/>
        </authorList>
    </citation>
    <scope>NUCLEOTIDE SEQUENCE [LARGE SCALE MRNA]</scope>
    <source>
        <strain>C57BL/6J</strain>
        <tissue>Head</tissue>
    </source>
</reference>
<reference key="3">
    <citation type="journal article" date="1996" name="EMBO J.">
        <title>A possible involvement of TIF1 alpha and TIF1 beta in the epigenetic control of transcription by nuclear receptors.</title>
        <authorList>
            <person name="le Douarin B."/>
            <person name="Nielsen A.L."/>
            <person name="Garnier J.-M."/>
            <person name="Ichinose H."/>
            <person name="Jeanmougin F."/>
            <person name="Losson R."/>
            <person name="Chambon P."/>
        </authorList>
    </citation>
    <scope>INTERACTION WITH TIF1A</scope>
</reference>
<reference key="4">
    <citation type="journal article" date="1999" name="EMBO J.">
        <title>Functional mammalian homologues of the Drosophila PEV-modifier Su(var)3-9 encode centromere-associated proteins which complex with the heterochromatin component M31.</title>
        <authorList>
            <person name="Aagaard L."/>
            <person name="Laible G."/>
            <person name="Selenko P."/>
            <person name="Schmid M."/>
            <person name="Dorn R."/>
            <person name="Schotta G."/>
            <person name="Kuhfittig S."/>
            <person name="Wolf A."/>
            <person name="Lebersorger A."/>
            <person name="Singh P.B."/>
            <person name="Reuter G."/>
            <person name="Jenuwein T."/>
        </authorList>
    </citation>
    <scope>INTERACTION WITH SUV39H1</scope>
</reference>
<reference key="5">
    <citation type="journal article" date="1999" name="EMBO J.">
        <title>Interaction with members of the heterochromatin protein 1 (HP1) family and histone deacetylation are differentially involved in transcriptional silencing by members of the TIF1 family.</title>
        <authorList>
            <person name="Nielsen A.L."/>
            <person name="Ortiz J.A."/>
            <person name="You J."/>
            <person name="Oulad-Abdelghani M."/>
            <person name="Khechumian R."/>
            <person name="Gansmuller A."/>
            <person name="Chambon P."/>
            <person name="Losson R."/>
        </authorList>
    </citation>
    <scope>INTERACTION WITH TRIM28</scope>
</reference>
<reference key="6">
    <citation type="journal article" date="2001" name="EMBO Rep.">
        <title>Histones H3/H4 form a tight complex with the inner nuclear membrane protein LBR and heterochromatin protein 1.</title>
        <authorList>
            <person name="Polioudaki H."/>
            <person name="Kourmouli N."/>
            <person name="Drosou V."/>
            <person name="Bakou A."/>
            <person name="Theodoropoulos P.A."/>
            <person name="Singh P.B."/>
            <person name="Giannakouros T."/>
            <person name="Georgatos S.D."/>
        </authorList>
    </citation>
    <scope>FUNCTION</scope>
    <scope>INTERACTION WITH HISTONE H3 AND LBR</scope>
</reference>
<reference key="7">
    <citation type="journal article" date="2001" name="Nature">
        <title>Methylation of histone H3 lysine 9 creates a binding site for HP1 proteins.</title>
        <authorList>
            <person name="Lachner M."/>
            <person name="O'Carroll D."/>
            <person name="Rea S."/>
            <person name="Mechtler K."/>
            <person name="Jenuwein T."/>
        </authorList>
    </citation>
    <scope>FUNCTION</scope>
    <scope>INTERACTION WITH HISTONE H3 LYS-9</scope>
    <scope>MUTAGENESIS OF VAL-23 AND VAL-26</scope>
</reference>
<reference key="8">
    <citation type="journal article" date="2004" name="Genes Dev.">
        <title>A silencing pathway to induce H3-K9 and H4-K20 trimethylation at constitutive heterochromatin.</title>
        <authorList>
            <person name="Schotta G."/>
            <person name="Lachner M."/>
            <person name="Sarma K."/>
            <person name="Ebert A."/>
            <person name="Sengupta R."/>
            <person name="Reuter G."/>
            <person name="Reinberg D."/>
            <person name="Jenuwein T."/>
        </authorList>
    </citation>
    <scope>INTERACTION WITH KMT5B AND KMT5C</scope>
</reference>
<reference key="9">
    <citation type="journal article" date="2006" name="Mol. Cell. Biol.">
        <title>PRISM/PRDM6, a transcriptional repressor that promotes the proliferative gene program in smooth muscle cells.</title>
        <authorList>
            <person name="Davis C.A."/>
            <person name="Haberland M."/>
            <person name="Arnold M.A."/>
            <person name="Sutherland L.B."/>
            <person name="McDonald O.G."/>
            <person name="Richardson J.A."/>
            <person name="Childs G."/>
            <person name="Harris S."/>
            <person name="Owens G.K."/>
            <person name="Olson E.N."/>
        </authorList>
    </citation>
    <scope>INTERACTION WITH PRDM6</scope>
</reference>
<reference key="10">
    <citation type="journal article" date="2010" name="Cell">
        <title>A tissue-specific atlas of mouse protein phosphorylation and expression.</title>
        <authorList>
            <person name="Huttlin E.L."/>
            <person name="Jedrychowski M.P."/>
            <person name="Elias J.E."/>
            <person name="Goswami T."/>
            <person name="Rad R."/>
            <person name="Beausoleil S.A."/>
            <person name="Villen J."/>
            <person name="Haas W."/>
            <person name="Sowa M.E."/>
            <person name="Gygi S.P."/>
        </authorList>
    </citation>
    <scope>IDENTIFICATION BY MASS SPECTROMETRY [LARGE SCALE ANALYSIS]</scope>
    <source>
        <tissue>Brain</tissue>
        <tissue>Brown adipose tissue</tissue>
        <tissue>Heart</tissue>
        <tissue>Kidney</tissue>
        <tissue>Liver</tissue>
        <tissue>Lung</tissue>
        <tissue>Pancreas</tissue>
        <tissue>Spleen</tissue>
        <tissue>Testis</tissue>
    </source>
</reference>
<reference key="11">
    <citation type="journal article" date="1997" name="EMBO J.">
        <title>Structure of the chromatin binding (chromo) domain from mouse modifier protein 1.</title>
        <authorList>
            <person name="Ball L.J."/>
            <person name="Murzina N.V."/>
            <person name="Broadhurst R.W."/>
            <person name="Raine A.R."/>
            <person name="Archer S.J."/>
            <person name="Stott F.J."/>
            <person name="Murzin A.G."/>
            <person name="Singh P.B."/>
            <person name="Domaille P.J."/>
            <person name="Laue E.D."/>
        </authorList>
    </citation>
    <scope>STRUCTURE BY NMR OF 10-80</scope>
</reference>
<reference key="12">
    <citation type="journal article" date="2000" name="EMBO J.">
        <title>The structure of mouse HP1 suggests a unique mode of single peptide recognition by the shadow chromo domain dimer.</title>
        <authorList>
            <person name="Brasher S.V."/>
            <person name="Smith B.O."/>
            <person name="Fogh R.H."/>
            <person name="Nietlispach D."/>
            <person name="Thiru A."/>
            <person name="Nielsen P.R."/>
            <person name="Broadhurst R.W."/>
            <person name="Ball L.J."/>
            <person name="Murzina N.V."/>
            <person name="Laue E.D."/>
        </authorList>
    </citation>
    <scope>STRUCTURE BY NMR OF 104-171</scope>
    <scope>SUBUNIT</scope>
    <scope>INTERACTION WITH CHAF1A AND TRIM28</scope>
    <scope>MUTAGENESIS OF ILE-161 AND TYR-164</scope>
</reference>
<reference key="13">
    <citation type="journal article" date="2002" name="Nature">
        <title>Structure of the HP1 chromodomain bound to histone H3 methylated at lysine 9.</title>
        <authorList>
            <person name="Nielsen P.R."/>
            <person name="Nietlispach D."/>
            <person name="Mott H.R."/>
            <person name="Callaghan J."/>
            <person name="Bannister A."/>
            <person name="Kouzarides T."/>
            <person name="Murzin A.G."/>
            <person name="Murzina N.V."/>
            <person name="Laue E.D."/>
        </authorList>
    </citation>
    <scope>STRUCTURE BY NMR OF 10-80</scope>
</reference>
<reference key="14">
    <citation type="journal article" date="2004" name="EMBO J.">
        <title>Structural basis of HP1/PXVXL motif peptide interactions and HP1 localisation to heterochromatin.</title>
        <authorList>
            <person name="Thiru A."/>
            <person name="Nietlispach D."/>
            <person name="Mott H.R."/>
            <person name="Okuwaki M."/>
            <person name="Lyon D."/>
            <person name="Nielsen P.R."/>
            <person name="Hirshberg M."/>
            <person name="Verreault A."/>
            <person name="Murzina N.V."/>
            <person name="Laue E.D."/>
        </authorList>
    </citation>
    <scope>STRUCTURE BY NMR OF 104-175</scope>
    <scope>SUBUNIT</scope>
    <scope>INTERACTION WITH CHAF1A</scope>
</reference>
<comment type="function">
    <text evidence="8 9">Component of heterochromatin. Recognizes and binds histone H3 tails methylated at 'Lys-9', leading to epigenetic repression. Interaction with lamin B receptor (LBR) can contribute to the association of the heterochromatin with the inner nuclear membrane.</text>
</comment>
<comment type="subunit">
    <text evidence="2 5 6 7 9 10 11 13">Homodimer (PubMed:10747027). Interacts directly with CHAF1A, EMSY, LBR, TIF1/TIF1A and TRIM28/TIF1B PXVXL motif via the chromoshadow domain (PubMed:10562550, PubMed:10747027, PubMed:8978696). Interacts directly with histone H3 methylated at 'Lys-9' via the chromo domain (PubMed:11571267). Interacts with SUV39H1, SETDB1, KMT5B and KMT5C (PubMed:10202156, PubMed:15145825). Interacts with PRDM6 (PubMed:16537907). Interacts with POGZ (By similarity). Interacts with CHAMP1 (By similarity). Interacts with INCENP (By similarity). Interacts with SGO1; the CBX1 homodimer binds to one molecule of SGO1 (By similarity). Interacts with LRIF1 (via PxVxL motif) (By similarity). Interacts with HDGFL2 (By similarity). Interacts with CHD3 (By similarity). Interacts with CHD4 (By similarity).</text>
</comment>
<comment type="interaction">
    <interactant intactId="EBI-78119">
        <id>P83917</id>
    </interactant>
    <interactant intactId="EBI-78119">
        <id>P83917</id>
        <label>Cbx1</label>
    </interactant>
    <organismsDiffer>false</organismsDiffer>
    <experiments>3</experiments>
</comment>
<comment type="interaction">
    <interactant intactId="EBI-78119">
        <id>P83917</id>
    </interactant>
    <interactant intactId="EBI-639217">
        <id>Q9QWF0</id>
        <label>Chaf1a</label>
    </interactant>
    <organismsDiffer>false</organismsDiffer>
    <experiments>3</experiments>
</comment>
<comment type="interaction">
    <interactant intactId="EBI-78119">
        <id>P83917</id>
    </interactant>
    <interactant intactId="EBI-79743">
        <id>P68433</id>
        <label>H3c8</label>
    </interactant>
    <organismsDiffer>false</organismsDiffer>
    <experiments>6</experiments>
</comment>
<comment type="interaction">
    <interactant intactId="EBI-78119">
        <id>P83917</id>
    </interactant>
    <interactant intactId="EBI-307947">
        <id>Q64127</id>
        <label>Trim24</label>
    </interactant>
    <organismsDiffer>false</organismsDiffer>
    <experiments>4</experiments>
</comment>
<comment type="interaction">
    <interactant intactId="EBI-78119">
        <id>P83917</id>
    </interactant>
    <interactant intactId="EBI-78139">
        <id>Q13263</id>
        <label>TRIM28</label>
    </interactant>
    <organismsDiffer>true</organismsDiffer>
    <experiments>2</experiments>
</comment>
<comment type="subcellular location">
    <subcellularLocation>
        <location evidence="2">Nucleus</location>
    </subcellularLocation>
    <text evidence="1">Unassociated with chromosomes during mitosis.</text>
</comment>
<comment type="tissue specificity">
    <text evidence="12">In all adult and embryonic tissues.</text>
</comment>
<comment type="PTM">
    <text evidence="1">Not phosphorylated.</text>
</comment>
<comment type="PTM">
    <text evidence="2">Ubiquitinated.</text>
</comment>
<gene>
    <name type="primary">Cbx1</name>
    <name type="synonym">Cbx</name>
</gene>
<proteinExistence type="evidence at protein level"/>
<accession>P83917</accession>
<accession>P23197</accession>
<feature type="chain" id="PRO_0000080200" description="Chromobox protein homolog 1">
    <location>
        <begin position="1"/>
        <end position="185"/>
    </location>
</feature>
<feature type="domain" description="Chromo 1" evidence="3">
    <location>
        <begin position="21"/>
        <end position="79"/>
    </location>
</feature>
<feature type="domain" description="Chromo 2; shadow subtype" evidence="3">
    <location>
        <begin position="117"/>
        <end position="175"/>
    </location>
</feature>
<feature type="region of interest" description="Disordered" evidence="4">
    <location>
        <begin position="63"/>
        <end position="124"/>
    </location>
</feature>
<feature type="compositionally biased region" description="Basic and acidic residues" evidence="4">
    <location>
        <begin position="73"/>
        <end position="89"/>
    </location>
</feature>
<feature type="compositionally biased region" description="Basic and acidic residues" evidence="4">
    <location>
        <begin position="96"/>
        <end position="121"/>
    </location>
</feature>
<feature type="site" description="Histone H3K9me2 binding">
    <location>
        <position position="21"/>
    </location>
</feature>
<feature type="site" description="Histone H3A7 binding">
    <location>
        <position position="23"/>
    </location>
</feature>
<feature type="site" description="Histone H3A7 binding">
    <location>
        <position position="40"/>
    </location>
</feature>
<feature type="site" description="Histone H3A7 binding">
    <location>
        <position position="42"/>
    </location>
</feature>
<feature type="site" description="Histone H3K9me2 binding">
    <location>
        <position position="42"/>
    </location>
</feature>
<feature type="site" description="Histone H3K9me2 binding">
    <location>
        <position position="45"/>
    </location>
</feature>
<feature type="site" description="Histone H3A7 binding">
    <location>
        <position position="58"/>
    </location>
</feature>
<feature type="site" description="Histone H3A7 binding">
    <location>
        <position position="60"/>
    </location>
</feature>
<feature type="site" description="Interacts with the PxVxL motif of TRIM28/TIF1B">
    <location>
        <position position="125"/>
    </location>
</feature>
<feature type="site" description="Interacts with the PxVxL motif of TRIM28/TIF1B">
    <location>
        <position position="126"/>
    </location>
</feature>
<feature type="site" description="Interacts with the PxVxL motif of TRIM28/TIF1B">
    <location>
        <position position="135"/>
    </location>
</feature>
<feature type="site" description="Interacts with the PxVxL motif of TRIM28/TIF1B">
    <location>
        <position position="146"/>
    </location>
</feature>
<feature type="site" description="Interacts with the PxVxL motif of TRIM28/TIF1B">
    <location>
        <position position="163"/>
    </location>
</feature>
<feature type="site" description="Interacts with the PxVxL motif of TRIM28/TIF1B">
    <location>
        <position position="167"/>
    </location>
</feature>
<feature type="site" description="Interacts with the PxVxL motif of TRIM28/TIF1B">
    <location>
        <position position="168"/>
    </location>
</feature>
<feature type="site" description="Interacts with the PxVxL motif of TRIM28/TIF1B">
    <location>
        <position position="170"/>
    </location>
</feature>
<feature type="modified residue" description="Phosphoserine" evidence="2">
    <location>
        <position position="89"/>
    </location>
</feature>
<feature type="modified residue" description="Phosphoserine" evidence="2">
    <location>
        <position position="91"/>
    </location>
</feature>
<feature type="modified residue" description="Phosphoserine" evidence="2">
    <location>
        <position position="175"/>
    </location>
</feature>
<feature type="cross-link" description="Glycyl lysine isopeptide (Lys-Gly) (interchain with G-Cter in SUMO2)" evidence="2">
    <location>
        <position position="9"/>
    </location>
</feature>
<feature type="cross-link" description="Glycyl lysine isopeptide (Lys-Gly) (interchain with G-Cter in SUMO2)" evidence="2">
    <location>
        <position position="33"/>
    </location>
</feature>
<feature type="cross-link" description="Glycyl lysine isopeptide (Lys-Gly) (interchain with G-Cter in SUMO2)" evidence="2">
    <location>
        <position position="99"/>
    </location>
</feature>
<feature type="cross-link" description="Glycyl lysine isopeptide (Lys-Gly) (interchain with G-Cter in SUMO2)" evidence="2">
    <location>
        <position position="150"/>
    </location>
</feature>
<feature type="mutagenesis site" description="Abolishes interaction with SUV39H1." evidence="8">
    <original>V</original>
    <variation>M</variation>
    <location>
        <position position="23"/>
    </location>
</feature>
<feature type="mutagenesis site" description="Abolishes interaction with SUV39H1." evidence="8">
    <original>V</original>
    <variation>R</variation>
    <location>
        <position position="26"/>
    </location>
</feature>
<feature type="mutagenesis site" description="Abolishes homodimer formation." evidence="7">
    <original>I</original>
    <variation>E</variation>
    <location>
        <position position="161"/>
    </location>
</feature>
<feature type="mutagenesis site" description="Abolishes homodimer formation." evidence="7">
    <original>Y</original>
    <variation>E</variation>
    <location>
        <position position="164"/>
    </location>
</feature>
<feature type="strand" evidence="14">
    <location>
        <begin position="11"/>
        <end position="13"/>
    </location>
</feature>
<feature type="strand" evidence="14">
    <location>
        <begin position="22"/>
        <end position="31"/>
    </location>
</feature>
<feature type="strand" evidence="14">
    <location>
        <begin position="33"/>
        <end position="47"/>
    </location>
</feature>
<feature type="strand" evidence="14">
    <location>
        <begin position="51"/>
        <end position="54"/>
    </location>
</feature>
<feature type="turn" evidence="14">
    <location>
        <begin position="55"/>
        <end position="57"/>
    </location>
</feature>
<feature type="helix" evidence="14">
    <location>
        <begin position="61"/>
        <end position="67"/>
    </location>
</feature>
<feature type="turn" evidence="14">
    <location>
        <begin position="68"/>
        <end position="72"/>
    </location>
</feature>
<feature type="turn" evidence="14">
    <location>
        <begin position="75"/>
        <end position="77"/>
    </location>
</feature>
<feature type="strand" evidence="16">
    <location>
        <begin position="104"/>
        <end position="107"/>
    </location>
</feature>
<feature type="helix" evidence="15">
    <location>
        <begin position="112"/>
        <end position="115"/>
    </location>
</feature>
<feature type="strand" evidence="15">
    <location>
        <begin position="125"/>
        <end position="134"/>
    </location>
</feature>
<feature type="strand" evidence="15">
    <location>
        <begin position="141"/>
        <end position="143"/>
    </location>
</feature>
<feature type="strand" evidence="16">
    <location>
        <begin position="145"/>
        <end position="148"/>
    </location>
</feature>
<feature type="helix" evidence="15">
    <location>
        <begin position="149"/>
        <end position="155"/>
    </location>
</feature>
<feature type="helix" evidence="15">
    <location>
        <begin position="157"/>
        <end position="166"/>
    </location>
</feature>
<name>CBX1_MOUSE</name>
<evidence type="ECO:0000250" key="1"/>
<evidence type="ECO:0000250" key="2">
    <source>
        <dbReference type="UniProtKB" id="P83916"/>
    </source>
</evidence>
<evidence type="ECO:0000255" key="3">
    <source>
        <dbReference type="PROSITE-ProRule" id="PRU00053"/>
    </source>
</evidence>
<evidence type="ECO:0000256" key="4">
    <source>
        <dbReference type="SAM" id="MobiDB-lite"/>
    </source>
</evidence>
<evidence type="ECO:0000269" key="5">
    <source>
    </source>
</evidence>
<evidence type="ECO:0000269" key="6">
    <source>
    </source>
</evidence>
<evidence type="ECO:0000269" key="7">
    <source>
    </source>
</evidence>
<evidence type="ECO:0000269" key="8">
    <source>
    </source>
</evidence>
<evidence type="ECO:0000269" key="9">
    <source>
    </source>
</evidence>
<evidence type="ECO:0000269" key="10">
    <source>
    </source>
</evidence>
<evidence type="ECO:0000269" key="11">
    <source>
    </source>
</evidence>
<evidence type="ECO:0000269" key="12">
    <source>
    </source>
</evidence>
<evidence type="ECO:0000269" key="13">
    <source>
    </source>
</evidence>
<evidence type="ECO:0007829" key="14">
    <source>
        <dbReference type="PDB" id="1AP0"/>
    </source>
</evidence>
<evidence type="ECO:0007829" key="15">
    <source>
        <dbReference type="PDB" id="1DZ1"/>
    </source>
</evidence>
<evidence type="ECO:0007829" key="16">
    <source>
        <dbReference type="PDB" id="1S4Z"/>
    </source>
</evidence>
<dbReference type="EMBL" id="X56690">
    <property type="protein sequence ID" value="CAA40018.1"/>
    <property type="molecule type" value="mRNA"/>
</dbReference>
<dbReference type="EMBL" id="AK014215">
    <property type="protein sequence ID" value="BAB29211.1"/>
    <property type="molecule type" value="mRNA"/>
</dbReference>
<dbReference type="CCDS" id="CCDS25303.1"/>
<dbReference type="PIR" id="S26847">
    <property type="entry name" value="S26847"/>
</dbReference>
<dbReference type="RefSeq" id="NP_001349489.1">
    <property type="nucleotide sequence ID" value="NM_001362560.1"/>
</dbReference>
<dbReference type="RefSeq" id="NP_001349490.1">
    <property type="nucleotide sequence ID" value="NM_001362561.1"/>
</dbReference>
<dbReference type="RefSeq" id="NP_001349492.1">
    <property type="nucleotide sequence ID" value="NM_001362563.1"/>
</dbReference>
<dbReference type="RefSeq" id="NP_031648.1">
    <property type="nucleotide sequence ID" value="NM_007622.4"/>
</dbReference>
<dbReference type="RefSeq" id="XP_006532162.1">
    <property type="nucleotide sequence ID" value="XM_006532099.2"/>
</dbReference>
<dbReference type="RefSeq" id="XP_006532163.1">
    <property type="nucleotide sequence ID" value="XM_006532100.2"/>
</dbReference>
<dbReference type="RefSeq" id="XP_011247006.1">
    <property type="nucleotide sequence ID" value="XM_011248704.2"/>
</dbReference>
<dbReference type="RefSeq" id="XP_017169731.1">
    <property type="nucleotide sequence ID" value="XM_017314242.2"/>
</dbReference>
<dbReference type="PDB" id="1AP0">
    <property type="method" value="NMR"/>
    <property type="chains" value="A=10-80"/>
</dbReference>
<dbReference type="PDB" id="1DZ1">
    <property type="method" value="NMR"/>
    <property type="chains" value="A/B=104-171"/>
</dbReference>
<dbReference type="PDB" id="1GUW">
    <property type="method" value="NMR"/>
    <property type="chains" value="A=10-80"/>
</dbReference>
<dbReference type="PDB" id="1S4Z">
    <property type="method" value="NMR"/>
    <property type="chains" value="A/B=104-176"/>
</dbReference>
<dbReference type="PDBsum" id="1AP0"/>
<dbReference type="PDBsum" id="1DZ1"/>
<dbReference type="PDBsum" id="1GUW"/>
<dbReference type="PDBsum" id="1S4Z"/>
<dbReference type="SMR" id="P83917"/>
<dbReference type="BioGRID" id="198534">
    <property type="interactions" value="213"/>
</dbReference>
<dbReference type="CORUM" id="P83917"/>
<dbReference type="DIP" id="DIP-30892N"/>
<dbReference type="FunCoup" id="P83917">
    <property type="interactions" value="3806"/>
</dbReference>
<dbReference type="IntAct" id="P83917">
    <property type="interactions" value="156"/>
</dbReference>
<dbReference type="MINT" id="P83917"/>
<dbReference type="STRING" id="10090.ENSMUSP00000091475"/>
<dbReference type="iPTMnet" id="P83917"/>
<dbReference type="PhosphoSitePlus" id="P83917"/>
<dbReference type="REPRODUCTION-2DPAGE" id="IPI00129466"/>
<dbReference type="jPOST" id="P83917"/>
<dbReference type="PaxDb" id="10090-ENSMUSP00000091475"/>
<dbReference type="PeptideAtlas" id="P83917"/>
<dbReference type="ProteomicsDB" id="281232"/>
<dbReference type="Pumba" id="P83917"/>
<dbReference type="Antibodypedia" id="3221">
    <property type="antibodies" value="365 antibodies from 39 providers"/>
</dbReference>
<dbReference type="DNASU" id="12412"/>
<dbReference type="Ensembl" id="ENSMUST00000093943.10">
    <property type="protein sequence ID" value="ENSMUSP00000091475.4"/>
    <property type="gene ID" value="ENSMUSG00000018666.14"/>
</dbReference>
<dbReference type="GeneID" id="12412"/>
<dbReference type="KEGG" id="mmu:12412"/>
<dbReference type="UCSC" id="uc007lck.1">
    <property type="organism name" value="mouse"/>
</dbReference>
<dbReference type="AGR" id="MGI:105369"/>
<dbReference type="CTD" id="10951"/>
<dbReference type="MGI" id="MGI:105369">
    <property type="gene designation" value="Cbx1"/>
</dbReference>
<dbReference type="VEuPathDB" id="HostDB:ENSMUSG00000018666"/>
<dbReference type="eggNOG" id="KOG1911">
    <property type="taxonomic scope" value="Eukaryota"/>
</dbReference>
<dbReference type="GeneTree" id="ENSGT00940000154152"/>
<dbReference type="HOGENOM" id="CLU_045874_1_0_1"/>
<dbReference type="InParanoid" id="P83917"/>
<dbReference type="OMA" id="KCPLKML"/>
<dbReference type="OrthoDB" id="433924at2759"/>
<dbReference type="PhylomeDB" id="P83917"/>
<dbReference type="TreeFam" id="TF350503"/>
<dbReference type="BioGRID-ORCS" id="12412">
    <property type="hits" value="5 hits in 81 CRISPR screens"/>
</dbReference>
<dbReference type="ChiTaRS" id="Cbx1">
    <property type="organism name" value="mouse"/>
</dbReference>
<dbReference type="EvolutionaryTrace" id="P83917"/>
<dbReference type="PRO" id="PR:P83917"/>
<dbReference type="Proteomes" id="UP000000589">
    <property type="component" value="Chromosome 11"/>
</dbReference>
<dbReference type="RNAct" id="P83917">
    <property type="molecule type" value="protein"/>
</dbReference>
<dbReference type="Bgee" id="ENSMUSG00000018666">
    <property type="expression patterns" value="Expressed in otic placode and 279 other cell types or tissues"/>
</dbReference>
<dbReference type="ExpressionAtlas" id="P83917">
    <property type="expression patterns" value="baseline and differential"/>
</dbReference>
<dbReference type="GO" id="GO:0000785">
    <property type="term" value="C:chromatin"/>
    <property type="evidence" value="ECO:0000314"/>
    <property type="project" value="MGI"/>
</dbReference>
<dbReference type="GO" id="GO:0010369">
    <property type="term" value="C:chromocenter"/>
    <property type="evidence" value="ECO:0000314"/>
    <property type="project" value="MGI"/>
</dbReference>
<dbReference type="GO" id="GO:0000781">
    <property type="term" value="C:chromosome, telomeric region"/>
    <property type="evidence" value="ECO:0007669"/>
    <property type="project" value="Ensembl"/>
</dbReference>
<dbReference type="GO" id="GO:0001939">
    <property type="term" value="C:female pronucleus"/>
    <property type="evidence" value="ECO:0000314"/>
    <property type="project" value="MGI"/>
</dbReference>
<dbReference type="GO" id="GO:0001940">
    <property type="term" value="C:male pronucleus"/>
    <property type="evidence" value="ECO:0000314"/>
    <property type="project" value="MGI"/>
</dbReference>
<dbReference type="GO" id="GO:0016604">
    <property type="term" value="C:nuclear body"/>
    <property type="evidence" value="ECO:0007669"/>
    <property type="project" value="Ensembl"/>
</dbReference>
<dbReference type="GO" id="GO:0005634">
    <property type="term" value="C:nucleus"/>
    <property type="evidence" value="ECO:0000314"/>
    <property type="project" value="MGI"/>
</dbReference>
<dbReference type="GO" id="GO:0005721">
    <property type="term" value="C:pericentric heterochromatin"/>
    <property type="evidence" value="ECO:0000314"/>
    <property type="project" value="MGI"/>
</dbReference>
<dbReference type="GO" id="GO:0090734">
    <property type="term" value="C:site of DNA damage"/>
    <property type="evidence" value="ECO:0000250"/>
    <property type="project" value="UniProtKB"/>
</dbReference>
<dbReference type="GO" id="GO:0005819">
    <property type="term" value="C:spindle"/>
    <property type="evidence" value="ECO:0007669"/>
    <property type="project" value="Ensembl"/>
</dbReference>
<dbReference type="GO" id="GO:1990226">
    <property type="term" value="F:histone methyltransferase binding"/>
    <property type="evidence" value="ECO:0007669"/>
    <property type="project" value="Ensembl"/>
</dbReference>
<dbReference type="GO" id="GO:0042802">
    <property type="term" value="F:identical protein binding"/>
    <property type="evidence" value="ECO:0000353"/>
    <property type="project" value="IntAct"/>
</dbReference>
<dbReference type="GO" id="GO:0006974">
    <property type="term" value="P:DNA damage response"/>
    <property type="evidence" value="ECO:0000250"/>
    <property type="project" value="UniProtKB"/>
</dbReference>
<dbReference type="GO" id="GO:0045892">
    <property type="term" value="P:negative regulation of DNA-templated transcription"/>
    <property type="evidence" value="ECO:0000314"/>
    <property type="project" value="MGI"/>
</dbReference>
<dbReference type="CDD" id="cd18650">
    <property type="entry name" value="CD_HP1beta_Cbx1"/>
    <property type="match status" value="1"/>
</dbReference>
<dbReference type="CDD" id="cd18654">
    <property type="entry name" value="CSD_HP1beta_Cbx1"/>
    <property type="match status" value="1"/>
</dbReference>
<dbReference type="DisProt" id="DP02864"/>
<dbReference type="FunFam" id="2.40.50.40:FF:000007">
    <property type="entry name" value="Chromobox protein homolog 1"/>
    <property type="match status" value="1"/>
</dbReference>
<dbReference type="FunFam" id="2.40.50.40:FF:000009">
    <property type="entry name" value="chromobox protein homolog 1"/>
    <property type="match status" value="1"/>
</dbReference>
<dbReference type="Gene3D" id="2.40.50.40">
    <property type="match status" value="2"/>
</dbReference>
<dbReference type="InterPro" id="IPR016197">
    <property type="entry name" value="Chromo-like_dom_sf"/>
</dbReference>
<dbReference type="InterPro" id="IPR000953">
    <property type="entry name" value="Chromo/chromo_shadow_dom"/>
</dbReference>
<dbReference type="InterPro" id="IPR017984">
    <property type="entry name" value="Chromo_dom_subgr"/>
</dbReference>
<dbReference type="InterPro" id="IPR023780">
    <property type="entry name" value="Chromo_domain"/>
</dbReference>
<dbReference type="InterPro" id="IPR008251">
    <property type="entry name" value="Chromo_shadow_dom"/>
</dbReference>
<dbReference type="InterPro" id="IPR023779">
    <property type="entry name" value="Chromodomain_CS"/>
</dbReference>
<dbReference type="InterPro" id="IPR051219">
    <property type="entry name" value="Heterochromatin_chromo-domain"/>
</dbReference>
<dbReference type="PANTHER" id="PTHR22812">
    <property type="entry name" value="CHROMOBOX PROTEIN"/>
    <property type="match status" value="1"/>
</dbReference>
<dbReference type="Pfam" id="PF00385">
    <property type="entry name" value="Chromo"/>
    <property type="match status" value="1"/>
</dbReference>
<dbReference type="Pfam" id="PF01393">
    <property type="entry name" value="Chromo_shadow"/>
    <property type="match status" value="1"/>
</dbReference>
<dbReference type="PRINTS" id="PR00504">
    <property type="entry name" value="CHROMODOMAIN"/>
</dbReference>
<dbReference type="SMART" id="SM00298">
    <property type="entry name" value="CHROMO"/>
    <property type="match status" value="2"/>
</dbReference>
<dbReference type="SMART" id="SM00300">
    <property type="entry name" value="ChSh"/>
    <property type="match status" value="1"/>
</dbReference>
<dbReference type="SUPFAM" id="SSF54160">
    <property type="entry name" value="Chromo domain-like"/>
    <property type="match status" value="2"/>
</dbReference>
<dbReference type="PROSITE" id="PS00598">
    <property type="entry name" value="CHROMO_1"/>
    <property type="match status" value="1"/>
</dbReference>
<dbReference type="PROSITE" id="PS50013">
    <property type="entry name" value="CHROMO_2"/>
    <property type="match status" value="2"/>
</dbReference>
<keyword id="KW-0002">3D-structure</keyword>
<keyword id="KW-1017">Isopeptide bond</keyword>
<keyword id="KW-0539">Nucleus</keyword>
<keyword id="KW-0597">Phosphoprotein</keyword>
<keyword id="KW-1185">Reference proteome</keyword>
<keyword id="KW-0677">Repeat</keyword>
<keyword id="KW-0832">Ubl conjugation</keyword>